<keyword id="KW-0997">Cell inner membrane</keyword>
<keyword id="KW-1003">Cell membrane</keyword>
<keyword id="KW-0249">Electron transport</keyword>
<keyword id="KW-0472">Membrane</keyword>
<keyword id="KW-1185">Reference proteome</keyword>
<keyword id="KW-1278">Translocase</keyword>
<keyword id="KW-0812">Transmembrane</keyword>
<keyword id="KW-1133">Transmembrane helix</keyword>
<keyword id="KW-0813">Transport</keyword>
<sequence>MTDYLLLFVGTVLVNNFVLVKFLGLCPFMGVSKKLETAMGMGLATTFVMTLASICAWLIDTWILIPLNLIYLRTMAFILVIAVVVQFTEMVVRKTSPVLYRLLGIFLPLITTNCAVLGVALLNINLGHNFLQSALYGFSAAVGFSLVMVLFAAIRERLAVADVPAPFRGNAIALITAGLMSLAFMGFSGLVKL</sequence>
<name>RSXA_ECOK1</name>
<gene>
    <name evidence="1" type="primary">rsxA</name>
    <name type="synonym">rnfA</name>
    <name type="ordered locus">Ecok1_15180</name>
    <name type="ORF">APECO1_710</name>
</gene>
<reference key="1">
    <citation type="journal article" date="2007" name="J. Bacteriol.">
        <title>The genome sequence of avian pathogenic Escherichia coli strain O1:K1:H7 shares strong similarities with human extraintestinal pathogenic E. coli genomes.</title>
        <authorList>
            <person name="Johnson T.J."/>
            <person name="Kariyawasam S."/>
            <person name="Wannemuehler Y."/>
            <person name="Mangiamele P."/>
            <person name="Johnson S.J."/>
            <person name="Doetkott C."/>
            <person name="Skyberg J.A."/>
            <person name="Lynne A.M."/>
            <person name="Johnson J.R."/>
            <person name="Nolan L.K."/>
        </authorList>
    </citation>
    <scope>NUCLEOTIDE SEQUENCE [LARGE SCALE GENOMIC DNA]</scope>
</reference>
<proteinExistence type="inferred from homology"/>
<organism>
    <name type="scientific">Escherichia coli O1:K1 / APEC</name>
    <dbReference type="NCBI Taxonomy" id="405955"/>
    <lineage>
        <taxon>Bacteria</taxon>
        <taxon>Pseudomonadati</taxon>
        <taxon>Pseudomonadota</taxon>
        <taxon>Gammaproteobacteria</taxon>
        <taxon>Enterobacterales</taxon>
        <taxon>Enterobacteriaceae</taxon>
        <taxon>Escherichia</taxon>
    </lineage>
</organism>
<evidence type="ECO:0000255" key="1">
    <source>
        <dbReference type="HAMAP-Rule" id="MF_00459"/>
    </source>
</evidence>
<feature type="chain" id="PRO_1000013525" description="Ion-translocating oxidoreductase complex subunit A">
    <location>
        <begin position="1"/>
        <end position="193"/>
    </location>
</feature>
<feature type="transmembrane region" description="Helical" evidence="1">
    <location>
        <begin position="5"/>
        <end position="25"/>
    </location>
</feature>
<feature type="transmembrane region" description="Helical" evidence="1">
    <location>
        <begin position="47"/>
        <end position="67"/>
    </location>
</feature>
<feature type="transmembrane region" description="Helical" evidence="1">
    <location>
        <begin position="72"/>
        <end position="92"/>
    </location>
</feature>
<feature type="transmembrane region" description="Helical" evidence="1">
    <location>
        <begin position="102"/>
        <end position="122"/>
    </location>
</feature>
<feature type="transmembrane region" description="Helical" evidence="1">
    <location>
        <begin position="134"/>
        <end position="154"/>
    </location>
</feature>
<feature type="transmembrane region" description="Helical" evidence="1">
    <location>
        <begin position="171"/>
        <end position="191"/>
    </location>
</feature>
<accession>A1ABH2</accession>
<comment type="function">
    <text evidence="1">Part of a membrane-bound complex that couples electron transfer with translocation of ions across the membrane. Required to maintain the reduced state of SoxR.</text>
</comment>
<comment type="subunit">
    <text evidence="1">The complex is composed of six subunits: RsxA, RsxB, RsxC, RsxD, RsxE and RsxG.</text>
</comment>
<comment type="subcellular location">
    <subcellularLocation>
        <location evidence="1">Cell inner membrane</location>
        <topology evidence="1">Multi-pass membrane protein</topology>
    </subcellularLocation>
</comment>
<comment type="similarity">
    <text evidence="1">Belongs to the NqrDE/RnfAE family.</text>
</comment>
<dbReference type="EC" id="7.-.-.-" evidence="1"/>
<dbReference type="EMBL" id="CP000468">
    <property type="protein sequence ID" value="ABJ01012.1"/>
    <property type="molecule type" value="Genomic_DNA"/>
</dbReference>
<dbReference type="RefSeq" id="WP_000133202.1">
    <property type="nucleotide sequence ID" value="NZ_CADILS010000002.1"/>
</dbReference>
<dbReference type="SMR" id="A1ABH2"/>
<dbReference type="KEGG" id="ecv:APECO1_710"/>
<dbReference type="HOGENOM" id="CLU_095255_1_0_6"/>
<dbReference type="Proteomes" id="UP000008216">
    <property type="component" value="Chromosome"/>
</dbReference>
<dbReference type="GO" id="GO:0005886">
    <property type="term" value="C:plasma membrane"/>
    <property type="evidence" value="ECO:0007669"/>
    <property type="project" value="UniProtKB-SubCell"/>
</dbReference>
<dbReference type="GO" id="GO:0022900">
    <property type="term" value="P:electron transport chain"/>
    <property type="evidence" value="ECO:0007669"/>
    <property type="project" value="UniProtKB-UniRule"/>
</dbReference>
<dbReference type="HAMAP" id="MF_00459">
    <property type="entry name" value="RsxA_RnfA"/>
    <property type="match status" value="1"/>
</dbReference>
<dbReference type="InterPro" id="IPR011293">
    <property type="entry name" value="Ion_transpt_RnfA/RsxA"/>
</dbReference>
<dbReference type="InterPro" id="IPR003667">
    <property type="entry name" value="NqrDE/RnfAE"/>
</dbReference>
<dbReference type="InterPro" id="IPR050133">
    <property type="entry name" value="NqrDE/RnfAE_oxidrdctase"/>
</dbReference>
<dbReference type="NCBIfam" id="NF003481">
    <property type="entry name" value="PRK05151.1"/>
    <property type="match status" value="1"/>
</dbReference>
<dbReference type="NCBIfam" id="TIGR01943">
    <property type="entry name" value="rnfA"/>
    <property type="match status" value="1"/>
</dbReference>
<dbReference type="PANTHER" id="PTHR30335">
    <property type="entry name" value="INTEGRAL MEMBRANE PROTEIN OF SOXR-REDUCING COMPLEX"/>
    <property type="match status" value="1"/>
</dbReference>
<dbReference type="PANTHER" id="PTHR30335:SF0">
    <property type="entry name" value="ION-TRANSLOCATING OXIDOREDUCTASE COMPLEX SUBUNIT A"/>
    <property type="match status" value="1"/>
</dbReference>
<dbReference type="Pfam" id="PF02508">
    <property type="entry name" value="Rnf-Nqr"/>
    <property type="match status" value="1"/>
</dbReference>
<dbReference type="PIRSF" id="PIRSF006102">
    <property type="entry name" value="NQR_DE"/>
    <property type="match status" value="1"/>
</dbReference>
<protein>
    <recommendedName>
        <fullName evidence="1">Ion-translocating oxidoreductase complex subunit A</fullName>
        <ecNumber evidence="1">7.-.-.-</ecNumber>
    </recommendedName>
    <alternativeName>
        <fullName evidence="1">Rsx electron transport complex subunit A</fullName>
    </alternativeName>
</protein>